<evidence type="ECO:0000255" key="1">
    <source>
        <dbReference type="HAMAP-Rule" id="MF_00382"/>
    </source>
</evidence>
<evidence type="ECO:0000305" key="2"/>
<reference key="1">
    <citation type="journal article" date="2006" name="BMC Plant Biol.">
        <title>Rapid and accurate pyrosequencing of angiosperm plastid genomes.</title>
        <authorList>
            <person name="Moore M.J."/>
            <person name="Dhingra A."/>
            <person name="Soltis P.S."/>
            <person name="Shaw R."/>
            <person name="Farmerie W.G."/>
            <person name="Folta K.M."/>
            <person name="Soltis D.E."/>
        </authorList>
    </citation>
    <scope>NUCLEOTIDE SEQUENCE [LARGE SCALE GENOMIC DNA]</scope>
</reference>
<proteinExistence type="inferred from homology"/>
<geneLocation type="chloroplast"/>
<dbReference type="EMBL" id="DQ923117">
    <property type="protein sequence ID" value="ABI49886.1"/>
    <property type="molecule type" value="Genomic_DNA"/>
</dbReference>
<dbReference type="RefSeq" id="YP_740673.1">
    <property type="nucleotide sequence ID" value="NC_008336.1"/>
</dbReference>
<dbReference type="SMR" id="Q09FT8"/>
<dbReference type="GeneID" id="4271683"/>
<dbReference type="GO" id="GO:0009507">
    <property type="term" value="C:chloroplast"/>
    <property type="evidence" value="ECO:0007669"/>
    <property type="project" value="UniProtKB-SubCell"/>
</dbReference>
<dbReference type="GO" id="GO:1990904">
    <property type="term" value="C:ribonucleoprotein complex"/>
    <property type="evidence" value="ECO:0007669"/>
    <property type="project" value="UniProtKB-KW"/>
</dbReference>
<dbReference type="GO" id="GO:0005840">
    <property type="term" value="C:ribosome"/>
    <property type="evidence" value="ECO:0007669"/>
    <property type="project" value="UniProtKB-KW"/>
</dbReference>
<dbReference type="GO" id="GO:0019843">
    <property type="term" value="F:rRNA binding"/>
    <property type="evidence" value="ECO:0007669"/>
    <property type="project" value="UniProtKB-UniRule"/>
</dbReference>
<dbReference type="GO" id="GO:0003735">
    <property type="term" value="F:structural constituent of ribosome"/>
    <property type="evidence" value="ECO:0007669"/>
    <property type="project" value="InterPro"/>
</dbReference>
<dbReference type="GO" id="GO:0000027">
    <property type="term" value="P:ribosomal large subunit assembly"/>
    <property type="evidence" value="ECO:0007669"/>
    <property type="project" value="UniProtKB-UniRule"/>
</dbReference>
<dbReference type="GO" id="GO:0006412">
    <property type="term" value="P:translation"/>
    <property type="evidence" value="ECO:0007669"/>
    <property type="project" value="InterPro"/>
</dbReference>
<dbReference type="CDD" id="cd07026">
    <property type="entry name" value="Ribosomal_L20"/>
    <property type="match status" value="1"/>
</dbReference>
<dbReference type="FunFam" id="1.10.1900.20:FF:000001">
    <property type="entry name" value="50S ribosomal protein L20"/>
    <property type="match status" value="1"/>
</dbReference>
<dbReference type="Gene3D" id="6.10.160.10">
    <property type="match status" value="1"/>
</dbReference>
<dbReference type="Gene3D" id="1.10.1900.20">
    <property type="entry name" value="Ribosomal protein L20"/>
    <property type="match status" value="1"/>
</dbReference>
<dbReference type="HAMAP" id="MF_00382">
    <property type="entry name" value="Ribosomal_bL20"/>
    <property type="match status" value="1"/>
</dbReference>
<dbReference type="InterPro" id="IPR005813">
    <property type="entry name" value="Ribosomal_bL20"/>
</dbReference>
<dbReference type="InterPro" id="IPR049946">
    <property type="entry name" value="RIBOSOMAL_L20_CS"/>
</dbReference>
<dbReference type="InterPro" id="IPR035566">
    <property type="entry name" value="Ribosomal_protein_bL20_C"/>
</dbReference>
<dbReference type="NCBIfam" id="TIGR01032">
    <property type="entry name" value="rplT_bact"/>
    <property type="match status" value="1"/>
</dbReference>
<dbReference type="PANTHER" id="PTHR10986">
    <property type="entry name" value="39S RIBOSOMAL PROTEIN L20"/>
    <property type="match status" value="1"/>
</dbReference>
<dbReference type="Pfam" id="PF00453">
    <property type="entry name" value="Ribosomal_L20"/>
    <property type="match status" value="1"/>
</dbReference>
<dbReference type="PRINTS" id="PR00062">
    <property type="entry name" value="RIBOSOMALL20"/>
</dbReference>
<dbReference type="SUPFAM" id="SSF74731">
    <property type="entry name" value="Ribosomal protein L20"/>
    <property type="match status" value="1"/>
</dbReference>
<dbReference type="PROSITE" id="PS00937">
    <property type="entry name" value="RIBOSOMAL_L20"/>
    <property type="match status" value="1"/>
</dbReference>
<keyword id="KW-0150">Chloroplast</keyword>
<keyword id="KW-0934">Plastid</keyword>
<keyword id="KW-0687">Ribonucleoprotein</keyword>
<keyword id="KW-0689">Ribosomal protein</keyword>
<keyword id="KW-0694">RNA-binding</keyword>
<keyword id="KW-0699">rRNA-binding</keyword>
<organism>
    <name type="scientific">Nandina domestica</name>
    <name type="common">Heavenly bamboo</name>
    <dbReference type="NCBI Taxonomy" id="41776"/>
    <lineage>
        <taxon>Eukaryota</taxon>
        <taxon>Viridiplantae</taxon>
        <taxon>Streptophyta</taxon>
        <taxon>Embryophyta</taxon>
        <taxon>Tracheophyta</taxon>
        <taxon>Spermatophyta</taxon>
        <taxon>Magnoliopsida</taxon>
        <taxon>Ranunculales</taxon>
        <taxon>Berberidaceae</taxon>
        <taxon>Nandinoideae</taxon>
        <taxon>Nandineae</taxon>
        <taxon>Nandina</taxon>
    </lineage>
</organism>
<feature type="chain" id="PRO_0000355515" description="Large ribosomal subunit protein bL20c">
    <location>
        <begin position="1"/>
        <end position="119"/>
    </location>
</feature>
<comment type="function">
    <text evidence="1">Binds directly to 23S ribosomal RNA and is necessary for the in vitro assembly process of the 50S ribosomal subunit. It is not involved in the protein synthesizing functions of that subunit.</text>
</comment>
<comment type="subcellular location">
    <subcellularLocation>
        <location>Plastid</location>
        <location>Chloroplast</location>
    </subcellularLocation>
</comment>
<comment type="similarity">
    <text evidence="1">Belongs to the bacterial ribosomal protein bL20 family.</text>
</comment>
<accession>Q09FT8</accession>
<protein>
    <recommendedName>
        <fullName evidence="1">Large ribosomal subunit protein bL20c</fullName>
    </recommendedName>
    <alternativeName>
        <fullName evidence="2">50S ribosomal protein L20, chloroplastic</fullName>
    </alternativeName>
</protein>
<gene>
    <name evidence="1" type="primary">rpl20</name>
</gene>
<sequence length="119" mass="14244">MTRIRRGYIARRRRTKIRLFASTFRGAHSRLTRTIIQQKMRALASSHRDRGRQKRNFRRLWITRINAAIREIGVSYSYSRSIKDLYKSQLLLNRKILAQIAISNTNCLYMISKEIIKFK</sequence>
<name>RK20_NANDO</name>